<comment type="catalytic activity">
    <reaction>
        <text>xylitol + NAD(+) = D-xylulose + NADH + H(+)</text>
        <dbReference type="Rhea" id="RHEA:20433"/>
        <dbReference type="ChEBI" id="CHEBI:15378"/>
        <dbReference type="ChEBI" id="CHEBI:17140"/>
        <dbReference type="ChEBI" id="CHEBI:17151"/>
        <dbReference type="ChEBI" id="CHEBI:57540"/>
        <dbReference type="ChEBI" id="CHEBI:57945"/>
        <dbReference type="EC" id="1.1.1.9"/>
    </reaction>
</comment>
<comment type="activity regulation">
    <text evidence="2 3">Activated by calcium and inhibited by zinc.</text>
</comment>
<comment type="similarity">
    <text evidence="3">Belongs to the zinc-containing alcohol dehydrogenase family.</text>
</comment>
<protein>
    <recommendedName>
        <fullName>D-xylulose reductase</fullName>
        <ecNumber>1.1.1.9</ecNumber>
    </recommendedName>
    <alternativeName>
        <fullName>Xylitol dehydrogenase</fullName>
        <shortName>XDH</shortName>
    </alternativeName>
</protein>
<feature type="chain" id="PRO_0000160882" description="D-xylulose reductase">
    <location>
        <begin position="1"/>
        <end position="134" status="greater than"/>
    </location>
</feature>
<feature type="region of interest" description="Disordered" evidence="1">
    <location>
        <begin position="31"/>
        <end position="115"/>
    </location>
</feature>
<feature type="compositionally biased region" description="Basic and acidic residues" evidence="1">
    <location>
        <begin position="50"/>
        <end position="59"/>
    </location>
</feature>
<feature type="non-consecutive residues" evidence="3">
    <location>
        <begin position="21"/>
        <end position="22"/>
    </location>
</feature>
<feature type="non-consecutive residues" evidence="3">
    <location>
        <begin position="37"/>
        <end position="38"/>
    </location>
</feature>
<feature type="non-consecutive residues" evidence="3">
    <location>
        <begin position="44"/>
        <end position="45"/>
    </location>
</feature>
<feature type="non-consecutive residues" evidence="3">
    <location>
        <begin position="55"/>
        <end position="56"/>
    </location>
</feature>
<feature type="non-consecutive residues" evidence="3">
    <location>
        <begin position="68"/>
        <end position="69"/>
    </location>
</feature>
<feature type="non-consecutive residues" evidence="3">
    <location>
        <begin position="76"/>
        <end position="77"/>
    </location>
</feature>
<feature type="non-consecutive residues" evidence="3">
    <location>
        <begin position="80"/>
        <end position="81"/>
    </location>
</feature>
<feature type="non-consecutive residues" evidence="3">
    <location>
        <begin position="92"/>
        <end position="93"/>
    </location>
</feature>
<feature type="non-consecutive residues" evidence="3">
    <location>
        <begin position="110"/>
        <end position="111"/>
    </location>
</feature>
<feature type="non-consecutive residues" evidence="3">
    <location>
        <begin position="128"/>
        <end position="129"/>
    </location>
</feature>
<feature type="non-terminal residue" evidence="3">
    <location>
        <position position="134"/>
    </location>
</feature>
<organism evidence="3">
    <name type="scientific">Sus scrofa</name>
    <name type="common">Pig</name>
    <dbReference type="NCBI Taxonomy" id="9823"/>
    <lineage>
        <taxon>Eukaryota</taxon>
        <taxon>Metazoa</taxon>
        <taxon>Chordata</taxon>
        <taxon>Craniata</taxon>
        <taxon>Vertebrata</taxon>
        <taxon>Euteleostomi</taxon>
        <taxon>Mammalia</taxon>
        <taxon>Eutheria</taxon>
        <taxon>Laurasiatheria</taxon>
        <taxon>Artiodactyla</taxon>
        <taxon>Suina</taxon>
        <taxon>Suidae</taxon>
        <taxon>Sus</taxon>
    </lineage>
</organism>
<name>XYL2_PIG</name>
<proteinExistence type="evidence at protein level"/>
<reference evidence="3" key="1">
    <citation type="submission" date="2001-07" db="UniProtKB">
        <title>Xylitol:NAD 2-oxidoreductase (D-xylulose reductase EC 1.1.1.9) from porcine kidney. Purification and properties.</title>
        <authorList>
            <person name="Schweiger M."/>
            <person name="Wissler J.H."/>
            <person name="Amselgruber W.M."/>
        </authorList>
    </citation>
    <scope>PROTEIN SEQUENCE</scope>
    <scope>ACTIVITY REGULATION</scope>
    <source>
        <tissue>Kidney</tissue>
    </source>
</reference>
<evidence type="ECO:0000256" key="1">
    <source>
        <dbReference type="SAM" id="MobiDB-lite"/>
    </source>
</evidence>
<evidence type="ECO:0000269" key="2">
    <source ref="1"/>
</evidence>
<evidence type="ECO:0000305" key="3"/>
<dbReference type="EC" id="1.1.1.9"/>
<dbReference type="InParanoid" id="P83049"/>
<dbReference type="Proteomes" id="UP000008227">
    <property type="component" value="Unplaced"/>
</dbReference>
<dbReference type="Proteomes" id="UP000314985">
    <property type="component" value="Unplaced"/>
</dbReference>
<dbReference type="Proteomes" id="UP000694570">
    <property type="component" value="Unplaced"/>
</dbReference>
<dbReference type="Proteomes" id="UP000694571">
    <property type="component" value="Unplaced"/>
</dbReference>
<dbReference type="Proteomes" id="UP000694720">
    <property type="component" value="Unplaced"/>
</dbReference>
<dbReference type="Proteomes" id="UP000694722">
    <property type="component" value="Unplaced"/>
</dbReference>
<dbReference type="Proteomes" id="UP000694723">
    <property type="component" value="Unplaced"/>
</dbReference>
<dbReference type="Proteomes" id="UP000694724">
    <property type="component" value="Unplaced"/>
</dbReference>
<dbReference type="Proteomes" id="UP000694725">
    <property type="component" value="Unplaced"/>
</dbReference>
<dbReference type="Proteomes" id="UP000694726">
    <property type="component" value="Unplaced"/>
</dbReference>
<dbReference type="Proteomes" id="UP000694727">
    <property type="component" value="Unplaced"/>
</dbReference>
<dbReference type="Proteomes" id="UP000694728">
    <property type="component" value="Unplaced"/>
</dbReference>
<dbReference type="GO" id="GO:0046526">
    <property type="term" value="F:D-xylulose reductase activity"/>
    <property type="evidence" value="ECO:0007669"/>
    <property type="project" value="UniProtKB-EC"/>
</dbReference>
<dbReference type="GO" id="GO:0046872">
    <property type="term" value="F:metal ion binding"/>
    <property type="evidence" value="ECO:0007669"/>
    <property type="project" value="UniProtKB-KW"/>
</dbReference>
<dbReference type="GO" id="GO:0042732">
    <property type="term" value="P:D-xylose metabolic process"/>
    <property type="evidence" value="ECO:0007669"/>
    <property type="project" value="UniProtKB-KW"/>
</dbReference>
<sequence>XXKLVESGXXLVQPGGSLRLSKXYTENVNHPATTTXYKXQPMTPDFTEXQTHEGTHQDVFDQPNLXXWKGNTLPEGYEPAKXGEXGTQDANPKXXQDGDEXTXTGXXQXDKIGRYNLXPTIFFEATPPKANENQ</sequence>
<keyword id="KW-0119">Carbohydrate metabolism</keyword>
<keyword id="KW-0903">Direct protein sequencing</keyword>
<keyword id="KW-0479">Metal-binding</keyword>
<keyword id="KW-0520">NAD</keyword>
<keyword id="KW-0560">Oxidoreductase</keyword>
<keyword id="KW-1185">Reference proteome</keyword>
<keyword id="KW-0859">Xylose metabolism</keyword>
<keyword id="KW-0862">Zinc</keyword>
<accession>P83049</accession>